<reference key="1">
    <citation type="journal article" date="1994" name="J. Bacteriol.">
        <title>Cloning and characterization of an autonomous replication sequence from Coxiella burnetii.</title>
        <authorList>
            <person name="Suhan M."/>
            <person name="Chen S.Y."/>
            <person name="Thompson H.A."/>
            <person name="Hoover T.A."/>
            <person name="Hill A."/>
            <person name="Williams J.C."/>
        </authorList>
    </citation>
    <scope>NUCLEOTIDE SEQUENCE [GENOMIC DNA]</scope>
    <source>
        <strain>Nine Mile phase I / Bratislava</strain>
    </source>
</reference>
<reference key="2">
    <citation type="journal article" date="2003" name="Proc. Natl. Acad. Sci. U.S.A.">
        <title>Complete genome sequence of the Q-fever pathogen, Coxiella burnetii.</title>
        <authorList>
            <person name="Seshadri R."/>
            <person name="Paulsen I.T."/>
            <person name="Eisen J.A."/>
            <person name="Read T.D."/>
            <person name="Nelson K.E."/>
            <person name="Nelson W.C."/>
            <person name="Ward N.L."/>
            <person name="Tettelin H."/>
            <person name="Davidsen T.M."/>
            <person name="Beanan M.J."/>
            <person name="DeBoy R.T."/>
            <person name="Daugherty S.C."/>
            <person name="Brinkac L.M."/>
            <person name="Madupu R."/>
            <person name="Dodson R.J."/>
            <person name="Khouri H.M."/>
            <person name="Lee K.H."/>
            <person name="Carty H.A."/>
            <person name="Scanlan D."/>
            <person name="Heinzen R.A."/>
            <person name="Thompson H.A."/>
            <person name="Samuel J.E."/>
            <person name="Fraser C.M."/>
            <person name="Heidelberg J.F."/>
        </authorList>
    </citation>
    <scope>NUCLEOTIDE SEQUENCE [LARGE SCALE GENOMIC DNA]</scope>
    <source>
        <strain>RSA 493 / Nine Mile phase I</strain>
    </source>
</reference>
<name>YIDC_COXBU</name>
<proteinExistence type="inferred from homology"/>
<feature type="chain" id="PRO_0000124710" description="Membrane protein insertase YidC">
    <location>
        <begin position="1"/>
        <end position="566"/>
    </location>
</feature>
<feature type="transmembrane region" description="Helical" evidence="1">
    <location>
        <begin position="3"/>
        <end position="23"/>
    </location>
</feature>
<feature type="transmembrane region" description="Helical" evidence="1">
    <location>
        <begin position="346"/>
        <end position="366"/>
    </location>
</feature>
<feature type="transmembrane region" description="Helical" evidence="1">
    <location>
        <begin position="369"/>
        <end position="389"/>
    </location>
</feature>
<feature type="transmembrane region" description="Helical" evidence="1">
    <location>
        <begin position="436"/>
        <end position="456"/>
    </location>
</feature>
<feature type="transmembrane region" description="Helical" evidence="1">
    <location>
        <begin position="509"/>
        <end position="529"/>
    </location>
</feature>
<organism>
    <name type="scientific">Coxiella burnetii (strain RSA 493 / Nine Mile phase I)</name>
    <dbReference type="NCBI Taxonomy" id="227377"/>
    <lineage>
        <taxon>Bacteria</taxon>
        <taxon>Pseudomonadati</taxon>
        <taxon>Pseudomonadota</taxon>
        <taxon>Gammaproteobacteria</taxon>
        <taxon>Legionellales</taxon>
        <taxon>Coxiellaceae</taxon>
        <taxon>Coxiella</taxon>
    </lineage>
</organism>
<protein>
    <recommendedName>
        <fullName evidence="1">Membrane protein insertase YidC</fullName>
    </recommendedName>
    <alternativeName>
        <fullName evidence="1">Foldase YidC</fullName>
    </alternativeName>
    <alternativeName>
        <fullName evidence="1">Membrane integrase YidC</fullName>
    </alternativeName>
    <alternativeName>
        <fullName evidence="1">Membrane protein YidC</fullName>
    </alternativeName>
</protein>
<gene>
    <name evidence="1" type="primary">yidC</name>
    <name type="ordered locus">CBU_1920</name>
</gene>
<sequence>MDIKRIILYVIVALLAIALFNAWQRDYPPTPKPTPTVEQPTANGDHPTAYTPPAFTPGAAEKTKKAGTIAFTSKVPEARLITVRTDVLDVEIDTQGGNIVSAKLPKYPVSLEEKQTPVQILSGEPNELYIAQSGLTNGNGQPTTVQFESEKKQYVLENGQNQLIVQLTGRAPDGLLVTKTYTFHRDDYAIHLAYQVKNNTSKPWQGSLYTQITRRQPPTEHHHFYVRSYNGASMGSPQTPYEKLSYESLDKQNIDRTSQSGWIAMQQHYFLSAWVPGNPELTYHYYSHVIPASDEPNVYVVGFVSPQMNVAAGSEAATHATLYVGPEIAKRLKGLAPGLERTIDYGWLWPISMLLFWILSAVHAVVKNWGWSIIITTILIKIVFYWFSAKSFRSMARMREMQPRIQALKERHGDDRQALSRATMELYRKEKINPLGGCLPMLIQVPVFIAFYYVIIESVQLRQAPFIFWIHDLSVKDPYYILPIIMGLSMLAQQWVSPTSPDPTQQKMMWILPVIFTVFFINFPAGLVLYWITNNVVQTLQQWYVNKTYESHKAKLKARRARKRKR</sequence>
<comment type="function">
    <text evidence="1">Required for the insertion and/or proper folding and/or complex formation of integral membrane proteins into the membrane. Involved in integration of membrane proteins that insert both dependently and independently of the Sec translocase complex, as well as at least some lipoproteins. Aids folding of multispanning membrane proteins.</text>
</comment>
<comment type="subunit">
    <text evidence="1">Interacts with the Sec translocase complex via SecD. Specifically interacts with transmembrane segments of nascent integral membrane proteins during membrane integration.</text>
</comment>
<comment type="subcellular location">
    <subcellularLocation>
        <location evidence="1">Cell inner membrane</location>
        <topology evidence="1">Multi-pass membrane protein</topology>
    </subcellularLocation>
</comment>
<comment type="similarity">
    <text evidence="1">Belongs to the OXA1/ALB3/YidC family. Type 1 subfamily.</text>
</comment>
<comment type="sequence caution" evidence="2">
    <conflict type="frameshift">
        <sequence resource="EMBL-CDS" id="AAA56919"/>
    </conflict>
</comment>
<comment type="sequence caution" evidence="2">
    <conflict type="erroneous initiation">
        <sequence resource="EMBL-CDS" id="AAA56921"/>
    </conflict>
    <text>Truncated N-terminus.</text>
</comment>
<comment type="sequence caution" evidence="2">
    <conflict type="frameshift">
        <sequence resource="EMBL-CDS" id="AAA56921"/>
    </conflict>
</comment>
<keyword id="KW-0997">Cell inner membrane</keyword>
<keyword id="KW-1003">Cell membrane</keyword>
<keyword id="KW-0143">Chaperone</keyword>
<keyword id="KW-0472">Membrane</keyword>
<keyword id="KW-0653">Protein transport</keyword>
<keyword id="KW-1185">Reference proteome</keyword>
<keyword id="KW-0812">Transmembrane</keyword>
<keyword id="KW-1133">Transmembrane helix</keyword>
<keyword id="KW-0813">Transport</keyword>
<dbReference type="EMBL" id="U10529">
    <property type="protein sequence ID" value="AAA56919.1"/>
    <property type="status" value="ALT_FRAME"/>
    <property type="molecule type" value="Genomic_DNA"/>
</dbReference>
<dbReference type="EMBL" id="U10529">
    <property type="protein sequence ID" value="AAA56921.1"/>
    <property type="status" value="ALT_SEQ"/>
    <property type="molecule type" value="Genomic_DNA"/>
</dbReference>
<dbReference type="EMBL" id="AE016828">
    <property type="protein sequence ID" value="AAO91411.1"/>
    <property type="molecule type" value="Genomic_DNA"/>
</dbReference>
<dbReference type="PIR" id="I40654">
    <property type="entry name" value="I40654"/>
</dbReference>
<dbReference type="PIR" id="I40656">
    <property type="entry name" value="I40656"/>
</dbReference>
<dbReference type="RefSeq" id="NP_820897.1">
    <property type="nucleotide sequence ID" value="NC_002971.4"/>
</dbReference>
<dbReference type="RefSeq" id="WP_010958538.1">
    <property type="nucleotide sequence ID" value="NC_002971.4"/>
</dbReference>
<dbReference type="SMR" id="P45650"/>
<dbReference type="STRING" id="227377.CBU_1920"/>
<dbReference type="EnsemblBacteria" id="AAO91411">
    <property type="protein sequence ID" value="AAO91411"/>
    <property type="gene ID" value="CBU_1920"/>
</dbReference>
<dbReference type="GeneID" id="1209833"/>
<dbReference type="KEGG" id="cbu:CBU_1920"/>
<dbReference type="PATRIC" id="fig|227377.7.peg.1904"/>
<dbReference type="eggNOG" id="COG0706">
    <property type="taxonomic scope" value="Bacteria"/>
</dbReference>
<dbReference type="HOGENOM" id="CLU_016535_3_0_6"/>
<dbReference type="OrthoDB" id="9780552at2"/>
<dbReference type="Proteomes" id="UP000002671">
    <property type="component" value="Chromosome"/>
</dbReference>
<dbReference type="GO" id="GO:0005886">
    <property type="term" value="C:plasma membrane"/>
    <property type="evidence" value="ECO:0000318"/>
    <property type="project" value="GO_Central"/>
</dbReference>
<dbReference type="GO" id="GO:0032977">
    <property type="term" value="F:membrane insertase activity"/>
    <property type="evidence" value="ECO:0000318"/>
    <property type="project" value="GO_Central"/>
</dbReference>
<dbReference type="GO" id="GO:0051205">
    <property type="term" value="P:protein insertion into membrane"/>
    <property type="evidence" value="ECO:0000318"/>
    <property type="project" value="GO_Central"/>
</dbReference>
<dbReference type="GO" id="GO:0015031">
    <property type="term" value="P:protein transport"/>
    <property type="evidence" value="ECO:0007669"/>
    <property type="project" value="UniProtKB-KW"/>
</dbReference>
<dbReference type="CDD" id="cd20070">
    <property type="entry name" value="5TM_YidC_Alb3"/>
    <property type="match status" value="1"/>
</dbReference>
<dbReference type="CDD" id="cd19961">
    <property type="entry name" value="EcYidC-like_peri"/>
    <property type="match status" value="1"/>
</dbReference>
<dbReference type="Gene3D" id="2.70.98.90">
    <property type="match status" value="1"/>
</dbReference>
<dbReference type="HAMAP" id="MF_01810">
    <property type="entry name" value="YidC_type1"/>
    <property type="match status" value="1"/>
</dbReference>
<dbReference type="InterPro" id="IPR019998">
    <property type="entry name" value="Membr_insert_YidC"/>
</dbReference>
<dbReference type="InterPro" id="IPR028053">
    <property type="entry name" value="Membr_insert_YidC_N"/>
</dbReference>
<dbReference type="InterPro" id="IPR001708">
    <property type="entry name" value="YidC/ALB3/OXA1/COX18"/>
</dbReference>
<dbReference type="InterPro" id="IPR028055">
    <property type="entry name" value="YidC/Oxa/ALB_C"/>
</dbReference>
<dbReference type="InterPro" id="IPR047196">
    <property type="entry name" value="YidC_ALB_C"/>
</dbReference>
<dbReference type="InterPro" id="IPR038221">
    <property type="entry name" value="YidC_periplasmic_sf"/>
</dbReference>
<dbReference type="NCBIfam" id="NF002352">
    <property type="entry name" value="PRK01318.1-3"/>
    <property type="match status" value="1"/>
</dbReference>
<dbReference type="NCBIfam" id="TIGR03593">
    <property type="entry name" value="yidC_nterm"/>
    <property type="match status" value="1"/>
</dbReference>
<dbReference type="NCBIfam" id="TIGR03592">
    <property type="entry name" value="yidC_oxa1_cterm"/>
    <property type="match status" value="1"/>
</dbReference>
<dbReference type="PANTHER" id="PTHR12428:SF65">
    <property type="entry name" value="CYTOCHROME C OXIDASE ASSEMBLY PROTEIN COX18, MITOCHONDRIAL"/>
    <property type="match status" value="1"/>
</dbReference>
<dbReference type="PANTHER" id="PTHR12428">
    <property type="entry name" value="OXA1"/>
    <property type="match status" value="1"/>
</dbReference>
<dbReference type="Pfam" id="PF02096">
    <property type="entry name" value="60KD_IMP"/>
    <property type="match status" value="1"/>
</dbReference>
<dbReference type="Pfam" id="PF14849">
    <property type="entry name" value="YidC_periplas"/>
    <property type="match status" value="1"/>
</dbReference>
<dbReference type="PRINTS" id="PR00701">
    <property type="entry name" value="60KDINNERMP"/>
</dbReference>
<dbReference type="PRINTS" id="PR01900">
    <property type="entry name" value="YIDCPROTEIN"/>
</dbReference>
<accession>P45650</accession>
<evidence type="ECO:0000255" key="1">
    <source>
        <dbReference type="HAMAP-Rule" id="MF_01810"/>
    </source>
</evidence>
<evidence type="ECO:0000305" key="2"/>